<feature type="chain" id="PRO_0000175918" description="Probable transcriptional regulatory protein TT_C0469">
    <location>
        <begin position="1"/>
        <end position="244"/>
    </location>
</feature>
<protein>
    <recommendedName>
        <fullName evidence="1">Probable transcriptional regulatory protein TT_C0469</fullName>
    </recommendedName>
</protein>
<accession>P62041</accession>
<comment type="subcellular location">
    <subcellularLocation>
        <location evidence="1">Cytoplasm</location>
    </subcellularLocation>
</comment>
<comment type="similarity">
    <text evidence="1">Belongs to the TACO1 family.</text>
</comment>
<dbReference type="EMBL" id="AE017221">
    <property type="protein sequence ID" value="AAS80817.1"/>
    <property type="molecule type" value="Genomic_DNA"/>
</dbReference>
<dbReference type="RefSeq" id="WP_011172915.1">
    <property type="nucleotide sequence ID" value="NC_005835.1"/>
</dbReference>
<dbReference type="SMR" id="P62041"/>
<dbReference type="GeneID" id="3170025"/>
<dbReference type="KEGG" id="tth:TT_C0469"/>
<dbReference type="eggNOG" id="COG0217">
    <property type="taxonomic scope" value="Bacteria"/>
</dbReference>
<dbReference type="HOGENOM" id="CLU_062974_2_2_0"/>
<dbReference type="OrthoDB" id="9781053at2"/>
<dbReference type="Proteomes" id="UP000000592">
    <property type="component" value="Chromosome"/>
</dbReference>
<dbReference type="GO" id="GO:0005829">
    <property type="term" value="C:cytosol"/>
    <property type="evidence" value="ECO:0007669"/>
    <property type="project" value="TreeGrafter"/>
</dbReference>
<dbReference type="GO" id="GO:0003677">
    <property type="term" value="F:DNA binding"/>
    <property type="evidence" value="ECO:0007669"/>
    <property type="project" value="UniProtKB-UniRule"/>
</dbReference>
<dbReference type="GO" id="GO:0006355">
    <property type="term" value="P:regulation of DNA-templated transcription"/>
    <property type="evidence" value="ECO:0007669"/>
    <property type="project" value="UniProtKB-UniRule"/>
</dbReference>
<dbReference type="FunFam" id="1.10.10.200:FF:000002">
    <property type="entry name" value="Probable transcriptional regulatory protein CLM62_37755"/>
    <property type="match status" value="1"/>
</dbReference>
<dbReference type="Gene3D" id="1.10.10.200">
    <property type="match status" value="1"/>
</dbReference>
<dbReference type="Gene3D" id="3.30.70.980">
    <property type="match status" value="2"/>
</dbReference>
<dbReference type="HAMAP" id="MF_00693">
    <property type="entry name" value="Transcrip_reg_TACO1"/>
    <property type="match status" value="1"/>
</dbReference>
<dbReference type="InterPro" id="IPR017856">
    <property type="entry name" value="Integrase-like_N"/>
</dbReference>
<dbReference type="InterPro" id="IPR048300">
    <property type="entry name" value="TACO1_YebC-like_2nd/3rd_dom"/>
</dbReference>
<dbReference type="InterPro" id="IPR049083">
    <property type="entry name" value="TACO1_YebC_N"/>
</dbReference>
<dbReference type="InterPro" id="IPR002876">
    <property type="entry name" value="Transcrip_reg_TACO1-like"/>
</dbReference>
<dbReference type="InterPro" id="IPR026564">
    <property type="entry name" value="Transcrip_reg_TACO1-like_dom3"/>
</dbReference>
<dbReference type="InterPro" id="IPR029072">
    <property type="entry name" value="YebC-like"/>
</dbReference>
<dbReference type="NCBIfam" id="NF001030">
    <property type="entry name" value="PRK00110.1"/>
    <property type="match status" value="1"/>
</dbReference>
<dbReference type="NCBIfam" id="NF009044">
    <property type="entry name" value="PRK12378.1"/>
    <property type="match status" value="1"/>
</dbReference>
<dbReference type="NCBIfam" id="TIGR01033">
    <property type="entry name" value="YebC/PmpR family DNA-binding transcriptional regulator"/>
    <property type="match status" value="1"/>
</dbReference>
<dbReference type="PANTHER" id="PTHR12532:SF6">
    <property type="entry name" value="TRANSCRIPTIONAL REGULATORY PROTEIN YEBC-RELATED"/>
    <property type="match status" value="1"/>
</dbReference>
<dbReference type="PANTHER" id="PTHR12532">
    <property type="entry name" value="TRANSLATIONAL ACTIVATOR OF CYTOCHROME C OXIDASE 1"/>
    <property type="match status" value="1"/>
</dbReference>
<dbReference type="Pfam" id="PF20772">
    <property type="entry name" value="TACO1_YebC_N"/>
    <property type="match status" value="1"/>
</dbReference>
<dbReference type="Pfam" id="PF01709">
    <property type="entry name" value="Transcrip_reg"/>
    <property type="match status" value="1"/>
</dbReference>
<dbReference type="SUPFAM" id="SSF75625">
    <property type="entry name" value="YebC-like"/>
    <property type="match status" value="1"/>
</dbReference>
<keyword id="KW-0963">Cytoplasm</keyword>
<keyword id="KW-0238">DNA-binding</keyword>
<keyword id="KW-0804">Transcription</keyword>
<keyword id="KW-0805">Transcription regulation</keyword>
<reference key="1">
    <citation type="journal article" date="2004" name="Nat. Biotechnol.">
        <title>The genome sequence of the extreme thermophile Thermus thermophilus.</title>
        <authorList>
            <person name="Henne A."/>
            <person name="Brueggemann H."/>
            <person name="Raasch C."/>
            <person name="Wiezer A."/>
            <person name="Hartsch T."/>
            <person name="Liesegang H."/>
            <person name="Johann A."/>
            <person name="Lienard T."/>
            <person name="Gohl O."/>
            <person name="Martinez-Arias R."/>
            <person name="Jacobi C."/>
            <person name="Starkuviene V."/>
            <person name="Schlenczeck S."/>
            <person name="Dencker S."/>
            <person name="Huber R."/>
            <person name="Klenk H.-P."/>
            <person name="Kramer W."/>
            <person name="Merkl R."/>
            <person name="Gottschalk G."/>
            <person name="Fritz H.-J."/>
        </authorList>
    </citation>
    <scope>NUCLEOTIDE SEQUENCE [LARGE SCALE GENOMIC DNA]</scope>
    <source>
        <strain>ATCC BAA-163 / DSM 7039 / HB27</strain>
    </source>
</reference>
<sequence length="244" mass="26664">MAGHSKWAQIKRKKAANDLKRGKLISKHLRAIQAAARAGGSPYPEANVQLRNAIEAARADDVPMENIERLLQKLQGGGEGAEQYEEIVYEGYAPGGVALLVYALTDNRNRTASEVRHVFSKHGGSLGTTGSVAWQFERRGVVVCENTEAAQEAAIELGALDLEEEGENLTVYTEPTEAYRIAEALKAKGVRVEAVEVVQHPQNTVALPPEEAQKVMRLVEALEDLDDVQHVYTNLDPESLQVEA</sequence>
<gene>
    <name type="ordered locus">TT_C0469</name>
</gene>
<name>Y469_THET2</name>
<organism>
    <name type="scientific">Thermus thermophilus (strain ATCC BAA-163 / DSM 7039 / HB27)</name>
    <dbReference type="NCBI Taxonomy" id="262724"/>
    <lineage>
        <taxon>Bacteria</taxon>
        <taxon>Thermotogati</taxon>
        <taxon>Deinococcota</taxon>
        <taxon>Deinococci</taxon>
        <taxon>Thermales</taxon>
        <taxon>Thermaceae</taxon>
        <taxon>Thermus</taxon>
    </lineage>
</organism>
<proteinExistence type="inferred from homology"/>
<evidence type="ECO:0000255" key="1">
    <source>
        <dbReference type="HAMAP-Rule" id="MF_00693"/>
    </source>
</evidence>